<proteinExistence type="evidence at protein level"/>
<protein>
    <recommendedName>
        <fullName evidence="7">Arrestin domain-containing protein 1</fullName>
    </recommendedName>
    <alternativeName>
        <fullName evidence="6">Alpha-arrestin 1</fullName>
    </alternativeName>
</protein>
<feature type="chain" id="PRO_0000244346" description="Arrestin domain-containing protein 1">
    <location>
        <begin position="1"/>
        <end position="434"/>
    </location>
</feature>
<feature type="region of interest" description="Disordered" evidence="2">
    <location>
        <begin position="292"/>
        <end position="349"/>
    </location>
</feature>
<feature type="short sequence motif" description="PPxY motif 1" evidence="1">
    <location>
        <begin position="401"/>
        <end position="404"/>
    </location>
</feature>
<feature type="short sequence motif" description="PPxY motif 2" evidence="1">
    <location>
        <begin position="414"/>
        <end position="417"/>
    </location>
</feature>
<feature type="compositionally biased region" description="Polar residues" evidence="2">
    <location>
        <begin position="330"/>
        <end position="343"/>
    </location>
</feature>
<feature type="splice variant" id="VSP_019543" description="In isoform 2." evidence="5">
    <location>
        <position position="207"/>
    </location>
</feature>
<feature type="sequence conflict" description="In Ref. 3; AAH18501." evidence="7" ref="3">
    <original>T</original>
    <variation>A</variation>
    <location>
        <position position="27"/>
    </location>
</feature>
<feature type="sequence conflict" description="In Ref. 3; AAH18501." evidence="7" ref="3">
    <original>R</original>
    <variation>P</variation>
    <location>
        <position position="297"/>
    </location>
</feature>
<reference key="1">
    <citation type="journal article" date="2005" name="Science">
        <title>The transcriptional landscape of the mammalian genome.</title>
        <authorList>
            <person name="Carninci P."/>
            <person name="Kasukawa T."/>
            <person name="Katayama S."/>
            <person name="Gough J."/>
            <person name="Frith M.C."/>
            <person name="Maeda N."/>
            <person name="Oyama R."/>
            <person name="Ravasi T."/>
            <person name="Lenhard B."/>
            <person name="Wells C."/>
            <person name="Kodzius R."/>
            <person name="Shimokawa K."/>
            <person name="Bajic V.B."/>
            <person name="Brenner S.E."/>
            <person name="Batalov S."/>
            <person name="Forrest A.R."/>
            <person name="Zavolan M."/>
            <person name="Davis M.J."/>
            <person name="Wilming L.G."/>
            <person name="Aidinis V."/>
            <person name="Allen J.E."/>
            <person name="Ambesi-Impiombato A."/>
            <person name="Apweiler R."/>
            <person name="Aturaliya R.N."/>
            <person name="Bailey T.L."/>
            <person name="Bansal M."/>
            <person name="Baxter L."/>
            <person name="Beisel K.W."/>
            <person name="Bersano T."/>
            <person name="Bono H."/>
            <person name="Chalk A.M."/>
            <person name="Chiu K.P."/>
            <person name="Choudhary V."/>
            <person name="Christoffels A."/>
            <person name="Clutterbuck D.R."/>
            <person name="Crowe M.L."/>
            <person name="Dalla E."/>
            <person name="Dalrymple B.P."/>
            <person name="de Bono B."/>
            <person name="Della Gatta G."/>
            <person name="di Bernardo D."/>
            <person name="Down T."/>
            <person name="Engstrom P."/>
            <person name="Fagiolini M."/>
            <person name="Faulkner G."/>
            <person name="Fletcher C.F."/>
            <person name="Fukushima T."/>
            <person name="Furuno M."/>
            <person name="Futaki S."/>
            <person name="Gariboldi M."/>
            <person name="Georgii-Hemming P."/>
            <person name="Gingeras T.R."/>
            <person name="Gojobori T."/>
            <person name="Green R.E."/>
            <person name="Gustincich S."/>
            <person name="Harbers M."/>
            <person name="Hayashi Y."/>
            <person name="Hensch T.K."/>
            <person name="Hirokawa N."/>
            <person name="Hill D."/>
            <person name="Huminiecki L."/>
            <person name="Iacono M."/>
            <person name="Ikeo K."/>
            <person name="Iwama A."/>
            <person name="Ishikawa T."/>
            <person name="Jakt M."/>
            <person name="Kanapin A."/>
            <person name="Katoh M."/>
            <person name="Kawasawa Y."/>
            <person name="Kelso J."/>
            <person name="Kitamura H."/>
            <person name="Kitano H."/>
            <person name="Kollias G."/>
            <person name="Krishnan S.P."/>
            <person name="Kruger A."/>
            <person name="Kummerfeld S.K."/>
            <person name="Kurochkin I.V."/>
            <person name="Lareau L.F."/>
            <person name="Lazarevic D."/>
            <person name="Lipovich L."/>
            <person name="Liu J."/>
            <person name="Liuni S."/>
            <person name="McWilliam S."/>
            <person name="Madan Babu M."/>
            <person name="Madera M."/>
            <person name="Marchionni L."/>
            <person name="Matsuda H."/>
            <person name="Matsuzawa S."/>
            <person name="Miki H."/>
            <person name="Mignone F."/>
            <person name="Miyake S."/>
            <person name="Morris K."/>
            <person name="Mottagui-Tabar S."/>
            <person name="Mulder N."/>
            <person name="Nakano N."/>
            <person name="Nakauchi H."/>
            <person name="Ng P."/>
            <person name="Nilsson R."/>
            <person name="Nishiguchi S."/>
            <person name="Nishikawa S."/>
            <person name="Nori F."/>
            <person name="Ohara O."/>
            <person name="Okazaki Y."/>
            <person name="Orlando V."/>
            <person name="Pang K.C."/>
            <person name="Pavan W.J."/>
            <person name="Pavesi G."/>
            <person name="Pesole G."/>
            <person name="Petrovsky N."/>
            <person name="Piazza S."/>
            <person name="Reed J."/>
            <person name="Reid J.F."/>
            <person name="Ring B.Z."/>
            <person name="Ringwald M."/>
            <person name="Rost B."/>
            <person name="Ruan Y."/>
            <person name="Salzberg S.L."/>
            <person name="Sandelin A."/>
            <person name="Schneider C."/>
            <person name="Schoenbach C."/>
            <person name="Sekiguchi K."/>
            <person name="Semple C.A."/>
            <person name="Seno S."/>
            <person name="Sessa L."/>
            <person name="Sheng Y."/>
            <person name="Shibata Y."/>
            <person name="Shimada H."/>
            <person name="Shimada K."/>
            <person name="Silva D."/>
            <person name="Sinclair B."/>
            <person name="Sperling S."/>
            <person name="Stupka E."/>
            <person name="Sugiura K."/>
            <person name="Sultana R."/>
            <person name="Takenaka Y."/>
            <person name="Taki K."/>
            <person name="Tammoja K."/>
            <person name="Tan S.L."/>
            <person name="Tang S."/>
            <person name="Taylor M.S."/>
            <person name="Tegner J."/>
            <person name="Teichmann S.A."/>
            <person name="Ueda H.R."/>
            <person name="van Nimwegen E."/>
            <person name="Verardo R."/>
            <person name="Wei C.L."/>
            <person name="Yagi K."/>
            <person name="Yamanishi H."/>
            <person name="Zabarovsky E."/>
            <person name="Zhu S."/>
            <person name="Zimmer A."/>
            <person name="Hide W."/>
            <person name="Bult C."/>
            <person name="Grimmond S.M."/>
            <person name="Teasdale R.D."/>
            <person name="Liu E.T."/>
            <person name="Brusic V."/>
            <person name="Quackenbush J."/>
            <person name="Wahlestedt C."/>
            <person name="Mattick J.S."/>
            <person name="Hume D.A."/>
            <person name="Kai C."/>
            <person name="Sasaki D."/>
            <person name="Tomaru Y."/>
            <person name="Fukuda S."/>
            <person name="Kanamori-Katayama M."/>
            <person name="Suzuki M."/>
            <person name="Aoki J."/>
            <person name="Arakawa T."/>
            <person name="Iida J."/>
            <person name="Imamura K."/>
            <person name="Itoh M."/>
            <person name="Kato T."/>
            <person name="Kawaji H."/>
            <person name="Kawagashira N."/>
            <person name="Kawashima T."/>
            <person name="Kojima M."/>
            <person name="Kondo S."/>
            <person name="Konno H."/>
            <person name="Nakano K."/>
            <person name="Ninomiya N."/>
            <person name="Nishio T."/>
            <person name="Okada M."/>
            <person name="Plessy C."/>
            <person name="Shibata K."/>
            <person name="Shiraki T."/>
            <person name="Suzuki S."/>
            <person name="Tagami M."/>
            <person name="Waki K."/>
            <person name="Watahiki A."/>
            <person name="Okamura-Oho Y."/>
            <person name="Suzuki H."/>
            <person name="Kawai J."/>
            <person name="Hayashizaki Y."/>
        </authorList>
    </citation>
    <scope>NUCLEOTIDE SEQUENCE [LARGE SCALE MRNA] (ISOFORM 1)</scope>
    <source>
        <strain>NOD</strain>
    </source>
</reference>
<reference key="2">
    <citation type="journal article" date="2009" name="PLoS Biol.">
        <title>Lineage-specific biology revealed by a finished genome assembly of the mouse.</title>
        <authorList>
            <person name="Church D.M."/>
            <person name="Goodstadt L."/>
            <person name="Hillier L.W."/>
            <person name="Zody M.C."/>
            <person name="Goldstein S."/>
            <person name="She X."/>
            <person name="Bult C.J."/>
            <person name="Agarwala R."/>
            <person name="Cherry J.L."/>
            <person name="DiCuccio M."/>
            <person name="Hlavina W."/>
            <person name="Kapustin Y."/>
            <person name="Meric P."/>
            <person name="Maglott D."/>
            <person name="Birtle Z."/>
            <person name="Marques A.C."/>
            <person name="Graves T."/>
            <person name="Zhou S."/>
            <person name="Teague B."/>
            <person name="Potamousis K."/>
            <person name="Churas C."/>
            <person name="Place M."/>
            <person name="Herschleb J."/>
            <person name="Runnheim R."/>
            <person name="Forrest D."/>
            <person name="Amos-Landgraf J."/>
            <person name="Schwartz D.C."/>
            <person name="Cheng Z."/>
            <person name="Lindblad-Toh K."/>
            <person name="Eichler E.E."/>
            <person name="Ponting C.P."/>
        </authorList>
    </citation>
    <scope>NUCLEOTIDE SEQUENCE [LARGE SCALE GENOMIC DNA]</scope>
    <source>
        <strain>C57BL/6J</strain>
    </source>
</reference>
<reference key="3">
    <citation type="journal article" date="2004" name="Genome Res.">
        <title>The status, quality, and expansion of the NIH full-length cDNA project: the Mammalian Gene Collection (MGC).</title>
        <authorList>
            <consortium name="The MGC Project Team"/>
        </authorList>
    </citation>
    <scope>NUCLEOTIDE SEQUENCE [LARGE SCALE MRNA] (ISOFORMS 1 AND 2)</scope>
    <source>
        <strain>Czech II</strain>
        <strain>FVB/N</strain>
        <tissue>Mammary tumor</tissue>
    </source>
</reference>
<reference key="4">
    <citation type="journal article" date="2010" name="Cell">
        <title>A tissue-specific atlas of mouse protein phosphorylation and expression.</title>
        <authorList>
            <person name="Huttlin E.L."/>
            <person name="Jedrychowski M.P."/>
            <person name="Elias J.E."/>
            <person name="Goswami T."/>
            <person name="Rad R."/>
            <person name="Beausoleil S.A."/>
            <person name="Villen J."/>
            <person name="Haas W."/>
            <person name="Sowa M.E."/>
            <person name="Gygi S.P."/>
        </authorList>
    </citation>
    <scope>IDENTIFICATION BY MASS SPECTROMETRY [LARGE SCALE ANALYSIS]</scope>
    <source>
        <tissue>Lung</tissue>
    </source>
</reference>
<reference key="5">
    <citation type="journal article" date="2013" name="J. Cell Sci.">
        <title>Alpha-arrestin 1 (ARRDC1) and beta-arrestins cooperate to mediate Notch degradation in mammals.</title>
        <authorList>
            <person name="Puca L."/>
            <person name="Chastagner P."/>
            <person name="Meas-Yedid V."/>
            <person name="Israel A."/>
            <person name="Brou C."/>
        </authorList>
    </citation>
    <scope>FUNCTION</scope>
</reference>
<reference key="6">
    <citation type="journal article" date="2016" name="Cell Discov.">
        <title>Regulation of the divalent metal ion transporter via membrane budding.</title>
        <authorList>
            <person name="Mackenzie K."/>
            <person name="Foot N.J."/>
            <person name="Anand S."/>
            <person name="Dalton H.E."/>
            <person name="Chaudhary N."/>
            <person name="Collins B.M."/>
            <person name="Mathivanan S."/>
            <person name="Kumar S."/>
        </authorList>
    </citation>
    <scope>FUNCTION</scope>
</reference>
<keyword id="KW-0025">Alternative splicing</keyword>
<keyword id="KW-1003">Cell membrane</keyword>
<keyword id="KW-0472">Membrane</keyword>
<keyword id="KW-1185">Reference proteome</keyword>
<keyword id="KW-0832">Ubl conjugation</keyword>
<comment type="function">
    <text evidence="1 3 4">Functions as an adapter recruiting ubiquitin-protein ligases to their specific substrates (PubMed:23886940, PubMed:27462458). Through an ubiquitination-dependent mechanism plays for instance a role in the incorporation of SLC11A2 into extracellular vesicles (PubMed:27462458). More generally, plays a role in the extracellular transport of proteins between cells through the release in the extracellular space of microvesicles (By similarity). By participating to the ITCH-mediated ubiquitination and subsequent degradation of NOTCH1, negatively regulates the NOTCH signaling pathway (PubMed:23886940).</text>
</comment>
<comment type="subunit">
    <text evidence="1">Interacts (via PPxY motifs) with ITCH (via WW domains); the interaction is direct and participates in the recruitment of the ubiquitin-protein ligase ITCH to the NOTCH1 receptor. Interacts with ARRB1 and ARRB2; the interaction is direct. Interacts with TSG101; may recruit TSG101 to the plasma membrane. Interacts (via PPxY motifs) with WWP2 (via WW domains); ubiquitinates ARRDC1. Interacts with SLC11A2; controls the incorporation of SLC11A2 into extracellular vesicles through an ubiquitination-dependent mechanism. Interacts with WWP1 (via WW domains). Interacts with NEDD4 (via WW domains). Interacts with PDCD6IP.</text>
</comment>
<comment type="subcellular location">
    <subcellularLocation>
        <location evidence="1">Cell membrane</location>
    </subcellularLocation>
    <text evidence="1">Also found in extracellular vesicles different from exosomes.</text>
</comment>
<comment type="alternative products">
    <event type="alternative splicing"/>
    <isoform>
        <id>Q99KN1-1</id>
        <name>1</name>
        <sequence type="displayed"/>
    </isoform>
    <isoform>
        <id>Q99KN1-2</id>
        <name>2</name>
        <sequence type="described" ref="VSP_019543"/>
    </isoform>
</comment>
<comment type="domain">
    <text evidence="1">The PPxY motifs mediate interaction with WW domain-containing ubiquitin-protein ligases.</text>
</comment>
<comment type="PTM">
    <text evidence="1">Ubiquitinated. Ubiquitination by WWP2; promotes localization to extracellular microvesicles. Ubiquitinated by WWP1.</text>
</comment>
<comment type="similarity">
    <text evidence="7">Belongs to the arrestin family.</text>
</comment>
<comment type="sequence caution" evidence="7">
    <conflict type="erroneous initiation">
        <sequence resource="EMBL-CDS" id="AAH04091"/>
    </conflict>
</comment>
<sequence>MGRVQLFEIRLSQGRVVYGPGEPLAGTVHLRLGAPLPFRAIRVTCMGSCGVSTKANDGAWVVEESYFNSSLSLADKGSLPAGEHNFPFQFLLPATAPTSFEGPFGKIVHQVRASIDTPRFSKDHKCSLVFYILSPLNLNSIPDIEQPNVASTTKKFSYKLVKTGNVVLTASTDLRGYVVGQVLRLQADIENQSGKDTSPVVASLLQKVSYKAKRWIYDVRTIAEVEGTGVKAWRRAQWQEQILVPALPQSALPGCSLIHIDYYLQVSMKAPEATVTLPLFVGNIAVNQTPLSPCPGRESSPGTLSLVVPSAPPQEEAEAVASGPHFSDPVSLSTKSHSQQQPLSAPLGSVSVTTTEPWVQVGSPARHSLHPPLCISIGATVPYFAEGSAGPVPTTSALILPPEYSSWGYPYEAPPSYEQSCGAAGTDLGLIPGS</sequence>
<name>ARRD1_MOUSE</name>
<organism>
    <name type="scientific">Mus musculus</name>
    <name type="common">Mouse</name>
    <dbReference type="NCBI Taxonomy" id="10090"/>
    <lineage>
        <taxon>Eukaryota</taxon>
        <taxon>Metazoa</taxon>
        <taxon>Chordata</taxon>
        <taxon>Craniata</taxon>
        <taxon>Vertebrata</taxon>
        <taxon>Euteleostomi</taxon>
        <taxon>Mammalia</taxon>
        <taxon>Eutheria</taxon>
        <taxon>Euarchontoglires</taxon>
        <taxon>Glires</taxon>
        <taxon>Rodentia</taxon>
        <taxon>Myomorpha</taxon>
        <taxon>Muroidea</taxon>
        <taxon>Muridae</taxon>
        <taxon>Murinae</taxon>
        <taxon>Mus</taxon>
        <taxon>Mus</taxon>
    </lineage>
</organism>
<evidence type="ECO:0000250" key="1">
    <source>
        <dbReference type="UniProtKB" id="Q8N5I2"/>
    </source>
</evidence>
<evidence type="ECO:0000256" key="2">
    <source>
        <dbReference type="SAM" id="MobiDB-lite"/>
    </source>
</evidence>
<evidence type="ECO:0000269" key="3">
    <source>
    </source>
</evidence>
<evidence type="ECO:0000269" key="4">
    <source>
    </source>
</evidence>
<evidence type="ECO:0000303" key="5">
    <source>
    </source>
</evidence>
<evidence type="ECO:0000303" key="6">
    <source>
    </source>
</evidence>
<evidence type="ECO:0000305" key="7"/>
<evidence type="ECO:0000312" key="8">
    <source>
        <dbReference type="MGI" id="MGI:2446136"/>
    </source>
</evidence>
<dbReference type="EMBL" id="AK170018">
    <property type="protein sequence ID" value="BAE41513.1"/>
    <property type="molecule type" value="mRNA"/>
</dbReference>
<dbReference type="EMBL" id="AL732525">
    <property type="status" value="NOT_ANNOTATED_CDS"/>
    <property type="molecule type" value="Genomic_DNA"/>
</dbReference>
<dbReference type="EMBL" id="BC004091">
    <property type="protein sequence ID" value="AAH04091.1"/>
    <property type="status" value="ALT_INIT"/>
    <property type="molecule type" value="mRNA"/>
</dbReference>
<dbReference type="EMBL" id="BC018501">
    <property type="protein sequence ID" value="AAH18501.1"/>
    <property type="molecule type" value="mRNA"/>
</dbReference>
<dbReference type="CCDS" id="CCDS15741.1">
    <molecule id="Q99KN1-2"/>
</dbReference>
<dbReference type="CCDS" id="CCDS50521.1">
    <molecule id="Q99KN1-1"/>
</dbReference>
<dbReference type="RefSeq" id="NP_001155957.1">
    <molecule id="Q99KN1-1"/>
    <property type="nucleotide sequence ID" value="NM_001162485.1"/>
</dbReference>
<dbReference type="RefSeq" id="NP_848495.2">
    <molecule id="Q99KN1-2"/>
    <property type="nucleotide sequence ID" value="NM_178408.3"/>
</dbReference>
<dbReference type="SMR" id="Q99KN1"/>
<dbReference type="FunCoup" id="Q99KN1">
    <property type="interactions" value="370"/>
</dbReference>
<dbReference type="STRING" id="10090.ENSMUSP00000028349"/>
<dbReference type="iPTMnet" id="Q99KN1"/>
<dbReference type="PhosphoSitePlus" id="Q99KN1"/>
<dbReference type="jPOST" id="Q99KN1"/>
<dbReference type="PaxDb" id="10090-ENSMUSP00000028349"/>
<dbReference type="PeptideAtlas" id="Q99KN1"/>
<dbReference type="ProteomicsDB" id="281836">
    <molecule id="Q99KN1-1"/>
</dbReference>
<dbReference type="ProteomicsDB" id="281837">
    <molecule id="Q99KN1-2"/>
</dbReference>
<dbReference type="Antibodypedia" id="49444">
    <property type="antibodies" value="147 antibodies from 25 providers"/>
</dbReference>
<dbReference type="Ensembl" id="ENSMUST00000028349.14">
    <molecule id="Q99KN1-1"/>
    <property type="protein sequence ID" value="ENSMUSP00000028349.8"/>
    <property type="gene ID" value="ENSMUSG00000026972.16"/>
</dbReference>
<dbReference type="Ensembl" id="ENSMUST00000102935.10">
    <molecule id="Q99KN1-2"/>
    <property type="protein sequence ID" value="ENSMUSP00000099999.4"/>
    <property type="gene ID" value="ENSMUSG00000026972.16"/>
</dbReference>
<dbReference type="GeneID" id="215705"/>
<dbReference type="KEGG" id="mmu:215705"/>
<dbReference type="UCSC" id="uc008ipm.2">
    <molecule id="Q99KN1-2"/>
    <property type="organism name" value="mouse"/>
</dbReference>
<dbReference type="UCSC" id="uc008ipn.2">
    <molecule id="Q99KN1-1"/>
    <property type="organism name" value="mouse"/>
</dbReference>
<dbReference type="AGR" id="MGI:2446136"/>
<dbReference type="CTD" id="92714"/>
<dbReference type="MGI" id="MGI:2446136">
    <property type="gene designation" value="Arrdc1"/>
</dbReference>
<dbReference type="VEuPathDB" id="HostDB:ENSMUSG00000026972"/>
<dbReference type="eggNOG" id="KOG3780">
    <property type="taxonomic scope" value="Eukaryota"/>
</dbReference>
<dbReference type="GeneTree" id="ENSGT00940000159652"/>
<dbReference type="HOGENOM" id="CLU_051966_0_0_1"/>
<dbReference type="InParanoid" id="Q99KN1"/>
<dbReference type="OMA" id="IPDIEHP"/>
<dbReference type="OrthoDB" id="7785529at2759"/>
<dbReference type="PhylomeDB" id="Q99KN1"/>
<dbReference type="TreeFam" id="TF313650"/>
<dbReference type="BioGRID-ORCS" id="215705">
    <property type="hits" value="3 hits in 76 CRISPR screens"/>
</dbReference>
<dbReference type="ChiTaRS" id="Arrdc1">
    <property type="organism name" value="mouse"/>
</dbReference>
<dbReference type="PRO" id="PR:Q99KN1"/>
<dbReference type="Proteomes" id="UP000000589">
    <property type="component" value="Chromosome 2"/>
</dbReference>
<dbReference type="RNAct" id="Q99KN1">
    <property type="molecule type" value="protein"/>
</dbReference>
<dbReference type="Bgee" id="ENSMUSG00000026972">
    <property type="expression patterns" value="Expressed in granulocyte and 246 other cell types or tissues"/>
</dbReference>
<dbReference type="ExpressionAtlas" id="Q99KN1">
    <property type="expression patterns" value="baseline and differential"/>
</dbReference>
<dbReference type="GO" id="GO:0031410">
    <property type="term" value="C:cytoplasmic vesicle"/>
    <property type="evidence" value="ECO:0000266"/>
    <property type="project" value="MGI"/>
</dbReference>
<dbReference type="GO" id="GO:1903561">
    <property type="term" value="C:extracellular vesicle"/>
    <property type="evidence" value="ECO:0000250"/>
    <property type="project" value="UniProtKB"/>
</dbReference>
<dbReference type="GO" id="GO:0005886">
    <property type="term" value="C:plasma membrane"/>
    <property type="evidence" value="ECO:0000250"/>
    <property type="project" value="UniProtKB"/>
</dbReference>
<dbReference type="GO" id="GO:1990763">
    <property type="term" value="F:arrestin family protein binding"/>
    <property type="evidence" value="ECO:0007669"/>
    <property type="project" value="Ensembl"/>
</dbReference>
<dbReference type="GO" id="GO:0042802">
    <property type="term" value="F:identical protein binding"/>
    <property type="evidence" value="ECO:0007669"/>
    <property type="project" value="Ensembl"/>
</dbReference>
<dbReference type="GO" id="GO:0031625">
    <property type="term" value="F:ubiquitin protein ligase binding"/>
    <property type="evidence" value="ECO:0007669"/>
    <property type="project" value="Ensembl"/>
</dbReference>
<dbReference type="GO" id="GO:1990756">
    <property type="term" value="F:ubiquitin-like ligase-substrate adaptor activity"/>
    <property type="evidence" value="ECO:0000250"/>
    <property type="project" value="UniProtKB"/>
</dbReference>
<dbReference type="GO" id="GO:0006858">
    <property type="term" value="P:extracellular transport"/>
    <property type="evidence" value="ECO:0000250"/>
    <property type="project" value="UniProtKB"/>
</dbReference>
<dbReference type="GO" id="GO:0140112">
    <property type="term" value="P:extracellular vesicle biogenesis"/>
    <property type="evidence" value="ECO:0000250"/>
    <property type="project" value="UniProtKB"/>
</dbReference>
<dbReference type="GO" id="GO:0045746">
    <property type="term" value="P:negative regulation of Notch signaling pathway"/>
    <property type="evidence" value="ECO:0000250"/>
    <property type="project" value="UniProtKB"/>
</dbReference>
<dbReference type="GO" id="GO:0015031">
    <property type="term" value="P:protein transport"/>
    <property type="evidence" value="ECO:0000250"/>
    <property type="project" value="UniProtKB"/>
</dbReference>
<dbReference type="GO" id="GO:0016567">
    <property type="term" value="P:protein ubiquitination"/>
    <property type="evidence" value="ECO:0000250"/>
    <property type="project" value="UniProtKB"/>
</dbReference>
<dbReference type="GO" id="GO:0006511">
    <property type="term" value="P:ubiquitin-dependent protein catabolic process"/>
    <property type="evidence" value="ECO:0000250"/>
    <property type="project" value="UniProtKB"/>
</dbReference>
<dbReference type="FunFam" id="2.60.40.640:FF:000032">
    <property type="entry name" value="Arrestin domain-containing protein 1"/>
    <property type="match status" value="1"/>
</dbReference>
<dbReference type="FunFam" id="2.60.40.640:FF:000013">
    <property type="entry name" value="Putative arrestin domain-containing protein 1"/>
    <property type="match status" value="1"/>
</dbReference>
<dbReference type="Gene3D" id="2.60.40.640">
    <property type="match status" value="2"/>
</dbReference>
<dbReference type="InterPro" id="IPR014752">
    <property type="entry name" value="Arrestin-like_C"/>
</dbReference>
<dbReference type="InterPro" id="IPR011021">
    <property type="entry name" value="Arrestin-like_N"/>
</dbReference>
<dbReference type="InterPro" id="IPR011022">
    <property type="entry name" value="Arrestin_C-like"/>
</dbReference>
<dbReference type="InterPro" id="IPR050357">
    <property type="entry name" value="Arrestin_domain-protein"/>
</dbReference>
<dbReference type="InterPro" id="IPR014756">
    <property type="entry name" value="Ig_E-set"/>
</dbReference>
<dbReference type="PANTHER" id="PTHR11188">
    <property type="entry name" value="ARRESTIN DOMAIN CONTAINING PROTEIN"/>
    <property type="match status" value="1"/>
</dbReference>
<dbReference type="PANTHER" id="PTHR11188:SF176">
    <property type="entry name" value="ARRESTIN DOMAIN-CONTAINING PROTEIN 1"/>
    <property type="match status" value="1"/>
</dbReference>
<dbReference type="Pfam" id="PF02752">
    <property type="entry name" value="Arrestin_C"/>
    <property type="match status" value="1"/>
</dbReference>
<dbReference type="Pfam" id="PF00339">
    <property type="entry name" value="Arrestin_N"/>
    <property type="match status" value="1"/>
</dbReference>
<dbReference type="SMART" id="SM01017">
    <property type="entry name" value="Arrestin_C"/>
    <property type="match status" value="1"/>
</dbReference>
<dbReference type="SUPFAM" id="SSF81296">
    <property type="entry name" value="E set domains"/>
    <property type="match status" value="2"/>
</dbReference>
<gene>
    <name evidence="8" type="primary">Arrdc1</name>
</gene>
<accession>Q99KN1</accession>
<accession>A2AIS7</accession>
<accession>A2AIS8</accession>
<accession>Q3TDT6</accession>
<accession>Q8VEG7</accession>